<accession>B5X5B4</accession>
<organism>
    <name type="scientific">Salmo salar</name>
    <name type="common">Atlantic salmon</name>
    <dbReference type="NCBI Taxonomy" id="8030"/>
    <lineage>
        <taxon>Eukaryota</taxon>
        <taxon>Metazoa</taxon>
        <taxon>Chordata</taxon>
        <taxon>Craniata</taxon>
        <taxon>Vertebrata</taxon>
        <taxon>Euteleostomi</taxon>
        <taxon>Actinopterygii</taxon>
        <taxon>Neopterygii</taxon>
        <taxon>Teleostei</taxon>
        <taxon>Protacanthopterygii</taxon>
        <taxon>Salmoniformes</taxon>
        <taxon>Salmonidae</taxon>
        <taxon>Salmoninae</taxon>
        <taxon>Salmo</taxon>
    </lineage>
</organism>
<evidence type="ECO:0000255" key="1">
    <source>
        <dbReference type="HAMAP-Rule" id="MF_03135"/>
    </source>
</evidence>
<gene>
    <name type="primary">tsfm</name>
</gene>
<protein>
    <recommendedName>
        <fullName evidence="1">Elongation factor Ts, mitochondrial</fullName>
        <shortName evidence="1">EF-Ts</shortName>
        <shortName evidence="1">EF-TsMt</shortName>
    </recommendedName>
</protein>
<proteinExistence type="evidence at transcript level"/>
<sequence>MALTYVFRSIRTEFSKVCTVHHAQSLHTGFPTLAAEKALLMKLRKSTGYTFINCKKALEKCDNDITKAESWLHEQAQKEGWSKASKLEGRRAKEGLIGLFVGDKAAVMVEVNCETDFVARNEKFQQLVKDVAFATMAHHSSKNQGQTGYVKSLLAAEDLSKLNLGEDASLADQLALTIGRLGENISVRRAVTVGVPAGWHIGSYIHGGVAGQSDMAMGRYGALVVFQGGKDGALDTLGRKLGQHVVGEAPVSLGNMDDLPCGDAETRLLPQSFLPDPSRTVAQYLTEQGARVLDFVRFQCGEAGSDGAH</sequence>
<keyword id="KW-0251">Elongation factor</keyword>
<keyword id="KW-0496">Mitochondrion</keyword>
<keyword id="KW-0648">Protein biosynthesis</keyword>
<keyword id="KW-1185">Reference proteome</keyword>
<reference key="1">
    <citation type="journal article" date="2010" name="BMC Genomics">
        <title>Salmo salar and Esox lucius full-length cDNA sequences reveal changes in evolutionary pressures on a post-tetraploidization genome.</title>
        <authorList>
            <person name="Leong J.S."/>
            <person name="Jantzen S.G."/>
            <person name="von Schalburg K.R."/>
            <person name="Cooper G.A."/>
            <person name="Messmer A.M."/>
            <person name="Liao N.Y."/>
            <person name="Munro S."/>
            <person name="Moore R."/>
            <person name="Holt R.A."/>
            <person name="Jones S.J."/>
            <person name="Davidson W.S."/>
            <person name="Koop B.F."/>
        </authorList>
    </citation>
    <scope>NUCLEOTIDE SEQUENCE [LARGE SCALE MRNA]</scope>
    <source>
        <tissue>Spleen</tissue>
    </source>
</reference>
<dbReference type="EMBL" id="BT046233">
    <property type="protein sequence ID" value="ACI66034.1"/>
    <property type="molecule type" value="mRNA"/>
</dbReference>
<dbReference type="RefSeq" id="XP_013988224.1">
    <property type="nucleotide sequence ID" value="XM_014132749.2"/>
</dbReference>
<dbReference type="SMR" id="B5X5B4"/>
<dbReference type="STRING" id="8030.ENSSSAP00000080884"/>
<dbReference type="PaxDb" id="8030-ENSSSAP00000080884"/>
<dbReference type="Ensembl" id="ENSSSAT00070064855">
    <property type="protein sequence ID" value="ENSSSAP00070062168"/>
    <property type="gene ID" value="ENSSSAG00070040356"/>
</dbReference>
<dbReference type="GeneID" id="106565519"/>
<dbReference type="KEGG" id="sasa:106565519"/>
<dbReference type="CTD" id="10102"/>
<dbReference type="OMA" id="QEYMLDD"/>
<dbReference type="OrthoDB" id="360175at7898"/>
<dbReference type="Proteomes" id="UP000087266">
    <property type="component" value="Chromosome ssa12"/>
</dbReference>
<dbReference type="Bgee" id="ENSSSAG00000067283">
    <property type="expression patterns" value="Expressed in terminal part of digestive tract and 24 other cell types or tissues"/>
</dbReference>
<dbReference type="GO" id="GO:0005739">
    <property type="term" value="C:mitochondrion"/>
    <property type="evidence" value="ECO:0007669"/>
    <property type="project" value="UniProtKB-SubCell"/>
</dbReference>
<dbReference type="GO" id="GO:0003746">
    <property type="term" value="F:translation elongation factor activity"/>
    <property type="evidence" value="ECO:0007669"/>
    <property type="project" value="UniProtKB-UniRule"/>
</dbReference>
<dbReference type="GO" id="GO:0070125">
    <property type="term" value="P:mitochondrial translational elongation"/>
    <property type="evidence" value="ECO:0007669"/>
    <property type="project" value="TreeGrafter"/>
</dbReference>
<dbReference type="CDD" id="cd14275">
    <property type="entry name" value="UBA_EF-Ts"/>
    <property type="match status" value="1"/>
</dbReference>
<dbReference type="FunFam" id="1.10.8.10:FF:000031">
    <property type="entry name" value="Elongation factor Ts, mitochondrial"/>
    <property type="match status" value="1"/>
</dbReference>
<dbReference type="FunFam" id="3.30.479.20:FF:000008">
    <property type="entry name" value="Elongation factor Ts, mitochondrial"/>
    <property type="match status" value="1"/>
</dbReference>
<dbReference type="Gene3D" id="1.10.8.10">
    <property type="entry name" value="DNA helicase RuvA subunit, C-terminal domain"/>
    <property type="match status" value="1"/>
</dbReference>
<dbReference type="Gene3D" id="3.30.479.20">
    <property type="entry name" value="Elongation factor Ts, dimerisation domain"/>
    <property type="match status" value="2"/>
</dbReference>
<dbReference type="HAMAP" id="MF_00050">
    <property type="entry name" value="EF_Ts"/>
    <property type="match status" value="1"/>
</dbReference>
<dbReference type="InterPro" id="IPR036402">
    <property type="entry name" value="EF-Ts_dimer_sf"/>
</dbReference>
<dbReference type="InterPro" id="IPR001816">
    <property type="entry name" value="Transl_elong_EFTs/EF1B"/>
</dbReference>
<dbReference type="InterPro" id="IPR014039">
    <property type="entry name" value="Transl_elong_EFTs/EF1B_dimer"/>
</dbReference>
<dbReference type="InterPro" id="IPR018101">
    <property type="entry name" value="Transl_elong_Ts_CS"/>
</dbReference>
<dbReference type="InterPro" id="IPR009060">
    <property type="entry name" value="UBA-like_sf"/>
</dbReference>
<dbReference type="NCBIfam" id="TIGR00116">
    <property type="entry name" value="tsf"/>
    <property type="match status" value="1"/>
</dbReference>
<dbReference type="PANTHER" id="PTHR11741">
    <property type="entry name" value="ELONGATION FACTOR TS"/>
    <property type="match status" value="1"/>
</dbReference>
<dbReference type="PANTHER" id="PTHR11741:SF0">
    <property type="entry name" value="ELONGATION FACTOR TS, MITOCHONDRIAL"/>
    <property type="match status" value="1"/>
</dbReference>
<dbReference type="Pfam" id="PF25025">
    <property type="entry name" value="EF-Ts_N"/>
    <property type="match status" value="1"/>
</dbReference>
<dbReference type="Pfam" id="PF00889">
    <property type="entry name" value="EF_TS"/>
    <property type="match status" value="1"/>
</dbReference>
<dbReference type="SUPFAM" id="SSF54713">
    <property type="entry name" value="Elongation factor Ts (EF-Ts), dimerisation domain"/>
    <property type="match status" value="2"/>
</dbReference>
<dbReference type="SUPFAM" id="SSF46934">
    <property type="entry name" value="UBA-like"/>
    <property type="match status" value="1"/>
</dbReference>
<dbReference type="PROSITE" id="PS01127">
    <property type="entry name" value="EF_TS_2"/>
    <property type="match status" value="1"/>
</dbReference>
<name>EFTS_SALSA</name>
<comment type="function">
    <text evidence="1">Associates with the EF-Tu.GDP complex and induces the exchange of GDP to GTP. It remains bound to the aminoacyl-tRNA.EF-Tu.GTP complex up to the GTP hydrolysis stage on the ribosome.</text>
</comment>
<comment type="subcellular location">
    <subcellularLocation>
        <location evidence="1">Mitochondrion</location>
    </subcellularLocation>
</comment>
<comment type="miscellaneous">
    <text evidence="1">This protein may be expected to contain an N-terminal transit peptide but none has been predicted.</text>
</comment>
<comment type="similarity">
    <text evidence="1">Belongs to the EF-Ts family.</text>
</comment>
<feature type="chain" id="PRO_0000402313" description="Elongation factor Ts, mitochondrial">
    <location>
        <begin position="1"/>
        <end position="309"/>
    </location>
</feature>